<accession>P80665</accession>
<organism>
    <name type="scientific">Struthio camelus</name>
    <name type="common">Common ostrich</name>
    <dbReference type="NCBI Taxonomy" id="8801"/>
    <lineage>
        <taxon>Eukaryota</taxon>
        <taxon>Metazoa</taxon>
        <taxon>Chordata</taxon>
        <taxon>Craniata</taxon>
        <taxon>Vertebrata</taxon>
        <taxon>Euteleostomi</taxon>
        <taxon>Archelosauria</taxon>
        <taxon>Archosauria</taxon>
        <taxon>Dinosauria</taxon>
        <taxon>Saurischia</taxon>
        <taxon>Theropoda</taxon>
        <taxon>Coelurosauria</taxon>
        <taxon>Aves</taxon>
        <taxon>Palaeognathae</taxon>
        <taxon>Struthioniformes</taxon>
        <taxon>Struthionidae</taxon>
        <taxon>Struthio</taxon>
    </lineage>
</organism>
<gene>
    <name type="primary">CGA</name>
</gene>
<proteinExistence type="evidence at protein level"/>
<protein>
    <recommendedName>
        <fullName>Glycoprotein hormones alpha chain</fullName>
    </recommendedName>
    <alternativeName>
        <fullName>Anterior pituitary glycoprotein hormones common subunit alpha</fullName>
    </alternativeName>
    <alternativeName>
        <fullName>Follicle-stimulating hormone alpha chain</fullName>
        <shortName>FSH-alpha</shortName>
    </alternativeName>
    <alternativeName>
        <fullName>Follitropin alpha chain</fullName>
    </alternativeName>
    <alternativeName>
        <fullName>Luteinizing hormone alpha chain</fullName>
        <shortName>LSH-alpha</shortName>
    </alternativeName>
    <alternativeName>
        <fullName>Lutropin alpha chain</fullName>
    </alternativeName>
    <alternativeName>
        <fullName>Thyroid-stimulating hormone alpha chain</fullName>
        <shortName>TSH-alpha</shortName>
    </alternativeName>
    <alternativeName>
        <fullName>Thyrotropin alpha chain</fullName>
    </alternativeName>
</protein>
<evidence type="ECO:0000250" key="1">
    <source>
        <dbReference type="UniProtKB" id="P01215"/>
    </source>
</evidence>
<evidence type="ECO:0000305" key="2"/>
<dbReference type="PIR" id="S74086">
    <property type="entry name" value="S74086"/>
</dbReference>
<dbReference type="SMR" id="P80665"/>
<dbReference type="GlyCosmos" id="P80665">
    <property type="glycosylation" value="2 sites, No reported glycans"/>
</dbReference>
<dbReference type="GO" id="GO:0005615">
    <property type="term" value="C:extracellular space"/>
    <property type="evidence" value="ECO:0000250"/>
    <property type="project" value="UniProtKB"/>
</dbReference>
<dbReference type="GO" id="GO:0016914">
    <property type="term" value="C:follicle-stimulating hormone complex"/>
    <property type="evidence" value="ECO:0000250"/>
    <property type="project" value="UniProtKB"/>
</dbReference>
<dbReference type="GO" id="GO:0016913">
    <property type="term" value="F:follicle-stimulating hormone activity"/>
    <property type="evidence" value="ECO:0000250"/>
    <property type="project" value="UniProtKB"/>
</dbReference>
<dbReference type="GO" id="GO:0007186">
    <property type="term" value="P:G protein-coupled receptor signaling pathway"/>
    <property type="evidence" value="ECO:0000250"/>
    <property type="project" value="UniProtKB"/>
</dbReference>
<dbReference type="GO" id="GO:0010893">
    <property type="term" value="P:positive regulation of steroid biosynthetic process"/>
    <property type="evidence" value="ECO:0000250"/>
    <property type="project" value="UniProtKB"/>
</dbReference>
<dbReference type="GO" id="GO:0010469">
    <property type="term" value="P:regulation of signaling receptor activity"/>
    <property type="evidence" value="ECO:0000250"/>
    <property type="project" value="UniProtKB"/>
</dbReference>
<dbReference type="GO" id="GO:0006590">
    <property type="term" value="P:thyroid hormone generation"/>
    <property type="evidence" value="ECO:0007669"/>
    <property type="project" value="TreeGrafter"/>
</dbReference>
<dbReference type="FunFam" id="2.10.90.10:FF:000011">
    <property type="entry name" value="Glycoprotein hormones alpha chain"/>
    <property type="match status" value="1"/>
</dbReference>
<dbReference type="Gene3D" id="2.10.90.10">
    <property type="entry name" value="Cystine-knot cytokines"/>
    <property type="match status" value="1"/>
</dbReference>
<dbReference type="InterPro" id="IPR029034">
    <property type="entry name" value="Cystine-knot_cytokine"/>
</dbReference>
<dbReference type="InterPro" id="IPR000476">
    <property type="entry name" value="Glyco_hormone"/>
</dbReference>
<dbReference type="PANTHER" id="PTHR11509">
    <property type="entry name" value="GLYCOPROTEIN HORMONE ALPHA CHAIN"/>
    <property type="match status" value="1"/>
</dbReference>
<dbReference type="PANTHER" id="PTHR11509:SF0">
    <property type="entry name" value="GLYCOPROTEIN HORMONES ALPHA CHAIN"/>
    <property type="match status" value="1"/>
</dbReference>
<dbReference type="Pfam" id="PF00236">
    <property type="entry name" value="Hormone_6"/>
    <property type="match status" value="1"/>
</dbReference>
<dbReference type="PRINTS" id="PR00274">
    <property type="entry name" value="GLYCOHORMONE"/>
</dbReference>
<dbReference type="SMART" id="SM00067">
    <property type="entry name" value="GHA"/>
    <property type="match status" value="1"/>
</dbReference>
<dbReference type="SUPFAM" id="SSF57501">
    <property type="entry name" value="Cystine-knot cytokines"/>
    <property type="match status" value="1"/>
</dbReference>
<dbReference type="PROSITE" id="PS00779">
    <property type="entry name" value="GLYCO_HORMONE_ALPHA_1"/>
    <property type="match status" value="1"/>
</dbReference>
<dbReference type="PROSITE" id="PS00780">
    <property type="entry name" value="GLYCO_HORMONE_ALPHA_2"/>
    <property type="match status" value="1"/>
</dbReference>
<dbReference type="PROSITE" id="PS50277">
    <property type="entry name" value="GLYCO_HORMONE_ALPHA_3"/>
    <property type="match status" value="1"/>
</dbReference>
<reference key="1">
    <citation type="journal article" date="1996" name="Eur. J. Biochem.">
        <title>Complete amino acid sequences of follitropin and lutropin in the ostrich, Struthio camelus.</title>
        <authorList>
            <person name="Koide Y."/>
            <person name="Papkoff H."/>
            <person name="Kawauchi H."/>
        </authorList>
    </citation>
    <scope>PROTEIN SEQUENCE</scope>
</reference>
<name>GLHA_STRCA</name>
<comment type="function">
    <text evidence="1">Shared alpha chain of heterodimeric glycoprotein hormones. These hormones bind specific receptors on target cells that in turn activate downstream signaling pathways.</text>
</comment>
<comment type="subunit">
    <text evidence="1">Heterodimer. Glycoprotein hormones are heterodimers composed of a common alpha chain described here and a unique beta chain which confers their biological specificity to the different hormones.</text>
</comment>
<comment type="subcellular location">
    <subcellularLocation>
        <location evidence="1">Secreted</location>
    </subcellularLocation>
</comment>
<comment type="similarity">
    <text evidence="2">Belongs to the glycoprotein hormones subunit alpha family.</text>
</comment>
<keyword id="KW-0903">Direct protein sequencing</keyword>
<keyword id="KW-1015">Disulfide bond</keyword>
<keyword id="KW-0325">Glycoprotein</keyword>
<keyword id="KW-0372">Hormone</keyword>
<keyword id="KW-0964">Secreted</keyword>
<sequence length="96" mass="10782">FPDGEFLMQGCPECKLGENRFFSKPGAPVYQCTGCCFSRAYPTPLRSKKTMLVPKNITSEATCCVAKAFTKITLKDNVKIENHTECHCSTCYYHKS</sequence>
<feature type="chain" id="PRO_0000149031" description="Glycoprotein hormones alpha chain">
    <location>
        <begin position="1"/>
        <end position="96"/>
    </location>
</feature>
<feature type="glycosylation site" description="N-linked (GlcNAc...) asparagine" evidence="1">
    <location>
        <position position="56"/>
    </location>
</feature>
<feature type="glycosylation site" description="N-linked (GlcNAc...) asparagine" evidence="1">
    <location>
        <position position="82"/>
    </location>
</feature>
<feature type="disulfide bond" evidence="1">
    <location>
        <begin position="11"/>
        <end position="35"/>
    </location>
</feature>
<feature type="disulfide bond" evidence="1">
    <location>
        <begin position="14"/>
        <end position="64"/>
    </location>
</feature>
<feature type="disulfide bond" evidence="1">
    <location>
        <begin position="32"/>
        <end position="86"/>
    </location>
</feature>
<feature type="disulfide bond" evidence="1">
    <location>
        <begin position="36"/>
        <end position="88"/>
    </location>
</feature>
<feature type="disulfide bond" evidence="1">
    <location>
        <begin position="63"/>
        <end position="91"/>
    </location>
</feature>